<organism>
    <name type="scientific">Bacillus thuringiensis (strain Al Hakam)</name>
    <dbReference type="NCBI Taxonomy" id="412694"/>
    <lineage>
        <taxon>Bacteria</taxon>
        <taxon>Bacillati</taxon>
        <taxon>Bacillota</taxon>
        <taxon>Bacilli</taxon>
        <taxon>Bacillales</taxon>
        <taxon>Bacillaceae</taxon>
        <taxon>Bacillus</taxon>
        <taxon>Bacillus cereus group</taxon>
    </lineage>
</organism>
<gene>
    <name evidence="1" type="primary">nadA</name>
    <name type="ordered locus">BALH_4009</name>
</gene>
<dbReference type="EC" id="2.5.1.72" evidence="1"/>
<dbReference type="EMBL" id="CP000485">
    <property type="protein sequence ID" value="ABK87228.1"/>
    <property type="molecule type" value="Genomic_DNA"/>
</dbReference>
<dbReference type="RefSeq" id="WP_000025291.1">
    <property type="nucleotide sequence ID" value="NC_008600.1"/>
</dbReference>
<dbReference type="SMR" id="A0RJ35"/>
<dbReference type="KEGG" id="btl:BALH_4009"/>
<dbReference type="HOGENOM" id="CLU_047382_2_0_9"/>
<dbReference type="UniPathway" id="UPA00253">
    <property type="reaction ID" value="UER00327"/>
</dbReference>
<dbReference type="GO" id="GO:0005829">
    <property type="term" value="C:cytosol"/>
    <property type="evidence" value="ECO:0007669"/>
    <property type="project" value="TreeGrafter"/>
</dbReference>
<dbReference type="GO" id="GO:0051539">
    <property type="term" value="F:4 iron, 4 sulfur cluster binding"/>
    <property type="evidence" value="ECO:0007669"/>
    <property type="project" value="UniProtKB-KW"/>
</dbReference>
<dbReference type="GO" id="GO:0046872">
    <property type="term" value="F:metal ion binding"/>
    <property type="evidence" value="ECO:0007669"/>
    <property type="project" value="UniProtKB-KW"/>
</dbReference>
<dbReference type="GO" id="GO:0008987">
    <property type="term" value="F:quinolinate synthetase A activity"/>
    <property type="evidence" value="ECO:0007669"/>
    <property type="project" value="UniProtKB-UniRule"/>
</dbReference>
<dbReference type="GO" id="GO:0034628">
    <property type="term" value="P:'de novo' NAD biosynthetic process from L-aspartate"/>
    <property type="evidence" value="ECO:0007669"/>
    <property type="project" value="TreeGrafter"/>
</dbReference>
<dbReference type="FunFam" id="3.40.50.10800:FF:000001">
    <property type="entry name" value="Quinolinate synthase A"/>
    <property type="match status" value="1"/>
</dbReference>
<dbReference type="Gene3D" id="3.40.50.10800">
    <property type="entry name" value="NadA-like"/>
    <property type="match status" value="3"/>
</dbReference>
<dbReference type="HAMAP" id="MF_00569">
    <property type="entry name" value="NadA_type3"/>
    <property type="match status" value="1"/>
</dbReference>
<dbReference type="InterPro" id="IPR003473">
    <property type="entry name" value="NadA"/>
</dbReference>
<dbReference type="InterPro" id="IPR036094">
    <property type="entry name" value="NadA_sf"/>
</dbReference>
<dbReference type="InterPro" id="IPR023515">
    <property type="entry name" value="Quinolinate_synth_A_type3"/>
</dbReference>
<dbReference type="NCBIfam" id="TIGR00550">
    <property type="entry name" value="nadA"/>
    <property type="match status" value="1"/>
</dbReference>
<dbReference type="NCBIfam" id="NF006880">
    <property type="entry name" value="PRK09375.2-1"/>
    <property type="match status" value="1"/>
</dbReference>
<dbReference type="NCBIfam" id="NF006883">
    <property type="entry name" value="PRK09375.2-4"/>
    <property type="match status" value="1"/>
</dbReference>
<dbReference type="PANTHER" id="PTHR30573:SF0">
    <property type="entry name" value="QUINOLINATE SYNTHASE, CHLOROPLASTIC"/>
    <property type="match status" value="1"/>
</dbReference>
<dbReference type="PANTHER" id="PTHR30573">
    <property type="entry name" value="QUINOLINATE SYNTHETASE A"/>
    <property type="match status" value="1"/>
</dbReference>
<dbReference type="Pfam" id="PF02445">
    <property type="entry name" value="NadA"/>
    <property type="match status" value="1"/>
</dbReference>
<dbReference type="SUPFAM" id="SSF142754">
    <property type="entry name" value="NadA-like"/>
    <property type="match status" value="1"/>
</dbReference>
<feature type="chain" id="PRO_1000024983" description="Quinolinate synthase">
    <location>
        <begin position="1"/>
        <end position="368"/>
    </location>
</feature>
<feature type="binding site" evidence="1">
    <location>
        <position position="46"/>
    </location>
    <ligand>
        <name>iminosuccinate</name>
        <dbReference type="ChEBI" id="CHEBI:77875"/>
    </ligand>
</feature>
<feature type="binding site" evidence="1">
    <location>
        <position position="63"/>
    </location>
    <ligand>
        <name>iminosuccinate</name>
        <dbReference type="ChEBI" id="CHEBI:77875"/>
    </ligand>
</feature>
<feature type="binding site" evidence="1">
    <location>
        <position position="110"/>
    </location>
    <ligand>
        <name>[4Fe-4S] cluster</name>
        <dbReference type="ChEBI" id="CHEBI:49883"/>
    </ligand>
</feature>
<feature type="binding site" evidence="1">
    <location>
        <begin position="141"/>
        <end position="143"/>
    </location>
    <ligand>
        <name>iminosuccinate</name>
        <dbReference type="ChEBI" id="CHEBI:77875"/>
    </ligand>
</feature>
<feature type="binding site" evidence="1">
    <location>
        <position position="162"/>
    </location>
    <ligand>
        <name>iminosuccinate</name>
        <dbReference type="ChEBI" id="CHEBI:77875"/>
    </ligand>
</feature>
<feature type="binding site" evidence="1">
    <location>
        <position position="230"/>
    </location>
    <ligand>
        <name>[4Fe-4S] cluster</name>
        <dbReference type="ChEBI" id="CHEBI:49883"/>
    </ligand>
</feature>
<feature type="binding site" evidence="1">
    <location>
        <begin position="256"/>
        <end position="258"/>
    </location>
    <ligand>
        <name>iminosuccinate</name>
        <dbReference type="ChEBI" id="CHEBI:77875"/>
    </ligand>
</feature>
<feature type="binding site" evidence="1">
    <location>
        <position position="273"/>
    </location>
    <ligand>
        <name>iminosuccinate</name>
        <dbReference type="ChEBI" id="CHEBI:77875"/>
    </ligand>
</feature>
<feature type="binding site" evidence="1">
    <location>
        <position position="320"/>
    </location>
    <ligand>
        <name>[4Fe-4S] cluster</name>
        <dbReference type="ChEBI" id="CHEBI:49883"/>
    </ligand>
</feature>
<reference key="1">
    <citation type="journal article" date="2007" name="J. Bacteriol.">
        <title>The complete genome sequence of Bacillus thuringiensis Al Hakam.</title>
        <authorList>
            <person name="Challacombe J.F."/>
            <person name="Altherr M.R."/>
            <person name="Xie G."/>
            <person name="Bhotika S.S."/>
            <person name="Brown N."/>
            <person name="Bruce D."/>
            <person name="Campbell C.S."/>
            <person name="Campbell M.L."/>
            <person name="Chen J."/>
            <person name="Chertkov O."/>
            <person name="Cleland C."/>
            <person name="Dimitrijevic M."/>
            <person name="Doggett N.A."/>
            <person name="Fawcett J.J."/>
            <person name="Glavina T."/>
            <person name="Goodwin L.A."/>
            <person name="Green L.D."/>
            <person name="Han C.S."/>
            <person name="Hill K.K."/>
            <person name="Hitchcock P."/>
            <person name="Jackson P.J."/>
            <person name="Keim P."/>
            <person name="Kewalramani A.R."/>
            <person name="Longmire J."/>
            <person name="Lucas S."/>
            <person name="Malfatti S."/>
            <person name="Martinez D."/>
            <person name="McMurry K."/>
            <person name="Meincke L.J."/>
            <person name="Misra M."/>
            <person name="Moseman B.L."/>
            <person name="Mundt M."/>
            <person name="Munk A.C."/>
            <person name="Okinaka R.T."/>
            <person name="Parson-Quintana B."/>
            <person name="Reilly L.P."/>
            <person name="Richardson P."/>
            <person name="Robinson D.L."/>
            <person name="Saunders E."/>
            <person name="Tapia R."/>
            <person name="Tesmer J.G."/>
            <person name="Thayer N."/>
            <person name="Thompson L.S."/>
            <person name="Tice H."/>
            <person name="Ticknor L.O."/>
            <person name="Wills P.L."/>
            <person name="Gilna P."/>
            <person name="Brettin T.S."/>
        </authorList>
    </citation>
    <scope>NUCLEOTIDE SEQUENCE [LARGE SCALE GENOMIC DNA]</scope>
    <source>
        <strain>Al Hakam</strain>
    </source>
</reference>
<sequence length="368" mass="41651">MSILEKVQPIETMLPERYYTMSTEDMEKRVREIKEKMGETLFIPGHHYQKDEVVQFSDAAGDSLQLAQVAASNKEAKYIVFCGVHFMAETADMLTTDEQVVILPDMRAGCSMADMADIEQTERAWKELTKLFGDTMIPLTYVNSTAAIKAFCGRNGGATVTSSNAKQMVSWAFTQKERLVFLPDQHLGRNTAYDLGIPLDKMAVWDPHTDSLEYDGDIEEIQVILWKGHCSVHQNFTVKNIENVRKNHPDMNIIVHPECCYEVVAASDYAGSTKYIIDMIELAPSGSKWAIGTEMNLVNRIIQQHPDKEIVSLNPFMCPCLTMNRIDLPHLLWALETIERGEEINVISVDKQVTEEAVLALNRMLERV</sequence>
<proteinExistence type="inferred from homology"/>
<keyword id="KW-0004">4Fe-4S</keyword>
<keyword id="KW-0963">Cytoplasm</keyword>
<keyword id="KW-0408">Iron</keyword>
<keyword id="KW-0411">Iron-sulfur</keyword>
<keyword id="KW-0479">Metal-binding</keyword>
<keyword id="KW-0662">Pyridine nucleotide biosynthesis</keyword>
<keyword id="KW-0808">Transferase</keyword>
<name>NADA_BACAH</name>
<accession>A0RJ35</accession>
<evidence type="ECO:0000255" key="1">
    <source>
        <dbReference type="HAMAP-Rule" id="MF_00569"/>
    </source>
</evidence>
<comment type="function">
    <text evidence="1">Catalyzes the condensation of iminoaspartate with dihydroxyacetone phosphate to form quinolinate.</text>
</comment>
<comment type="catalytic activity">
    <reaction evidence="1">
        <text>iminosuccinate + dihydroxyacetone phosphate = quinolinate + phosphate + 2 H2O + H(+)</text>
        <dbReference type="Rhea" id="RHEA:25888"/>
        <dbReference type="ChEBI" id="CHEBI:15377"/>
        <dbReference type="ChEBI" id="CHEBI:15378"/>
        <dbReference type="ChEBI" id="CHEBI:29959"/>
        <dbReference type="ChEBI" id="CHEBI:43474"/>
        <dbReference type="ChEBI" id="CHEBI:57642"/>
        <dbReference type="ChEBI" id="CHEBI:77875"/>
        <dbReference type="EC" id="2.5.1.72"/>
    </reaction>
    <physiologicalReaction direction="left-to-right" evidence="1">
        <dbReference type="Rhea" id="RHEA:25889"/>
    </physiologicalReaction>
</comment>
<comment type="cofactor">
    <cofactor evidence="1">
        <name>[4Fe-4S] cluster</name>
        <dbReference type="ChEBI" id="CHEBI:49883"/>
    </cofactor>
    <text evidence="1">Binds 1 [4Fe-4S] cluster per subunit.</text>
</comment>
<comment type="pathway">
    <text evidence="1">Cofactor biosynthesis; NAD(+) biosynthesis; quinolinate from iminoaspartate: step 1/1.</text>
</comment>
<comment type="subcellular location">
    <subcellularLocation>
        <location evidence="1">Cytoplasm</location>
    </subcellularLocation>
</comment>
<comment type="similarity">
    <text evidence="1">Belongs to the quinolinate synthase family. Type 3 subfamily.</text>
</comment>
<protein>
    <recommendedName>
        <fullName evidence="1">Quinolinate synthase</fullName>
        <ecNumber evidence="1">2.5.1.72</ecNumber>
    </recommendedName>
</protein>